<gene>
    <name evidence="16" type="primary">Agbl4</name>
    <name evidence="9" type="synonym">Ccp6</name>
</gene>
<protein>
    <recommendedName>
        <fullName evidence="10">Cytosolic carboxypeptidase 6</fullName>
        <ecNumber evidence="5 6 7 8">3.4.17.-</ecNumber>
        <ecNumber evidence="5">3.4.17.24</ecNumber>
    </recommendedName>
    <alternativeName>
        <fullName>ATP/GTP-binding protein-like 4</fullName>
    </alternativeName>
    <alternativeName>
        <fullName evidence="11">Protein deglutamylase CCP6</fullName>
    </alternativeName>
</protein>
<feature type="chain" id="PRO_0000284836" description="Cytosolic carboxypeptidase 6">
    <location>
        <begin position="1"/>
        <end position="540"/>
    </location>
</feature>
<feature type="domain" description="Peptidase M14" evidence="3">
    <location>
        <begin position="167"/>
        <end position="438"/>
    </location>
</feature>
<feature type="active site" description="Proton donor/acceptor" evidence="3">
    <location>
        <position position="401"/>
    </location>
</feature>
<feature type="binding site" evidence="3 12">
    <location>
        <position position="230"/>
    </location>
    <ligand>
        <name>Zn(2+)</name>
        <dbReference type="ChEBI" id="CHEBI:29105"/>
        <note>catalytic</note>
    </ligand>
</feature>
<feature type="binding site" evidence="3 12">
    <location>
        <position position="233"/>
    </location>
    <ligand>
        <name>Zn(2+)</name>
        <dbReference type="ChEBI" id="CHEBI:29105"/>
        <note>catalytic</note>
    </ligand>
</feature>
<feature type="binding site" evidence="3">
    <location>
        <position position="328"/>
    </location>
    <ligand>
        <name>Zn(2+)</name>
        <dbReference type="ChEBI" id="CHEBI:29105"/>
        <note>catalytic</note>
    </ligand>
</feature>
<feature type="splice variant" id="VSP_024671" description="In isoform 2." evidence="9">
    <original>SKEERRLG</original>
    <variation>FRLQRTHL</variation>
    <location>
        <begin position="456"/>
        <end position="463"/>
    </location>
</feature>
<feature type="splice variant" id="VSP_024672" description="In isoform 2." evidence="9">
    <location>
        <begin position="464"/>
        <end position="540"/>
    </location>
</feature>
<feature type="mutagenesis site" description="Abolishes deglutamylase activity; when associated with Q-233." evidence="5 7">
    <original>H</original>
    <variation>S</variation>
    <location>
        <position position="230"/>
    </location>
</feature>
<feature type="mutagenesis site" description="Abolishes deglutamylase activity; when associated with S-230." evidence="5 7">
    <original>E</original>
    <variation>Q</variation>
    <location>
        <position position="233"/>
    </location>
</feature>
<name>CBPC6_MOUSE</name>
<evidence type="ECO:0000250" key="1">
    <source>
        <dbReference type="UniProtKB" id="P00730"/>
    </source>
</evidence>
<evidence type="ECO:0000250" key="2">
    <source>
        <dbReference type="UniProtKB" id="Q5VU57"/>
    </source>
</evidence>
<evidence type="ECO:0000255" key="3">
    <source>
        <dbReference type="PROSITE-ProRule" id="PRU01379"/>
    </source>
</evidence>
<evidence type="ECO:0000269" key="4">
    <source>
    </source>
</evidence>
<evidence type="ECO:0000269" key="5">
    <source>
    </source>
</evidence>
<evidence type="ECO:0000269" key="6">
    <source>
    </source>
</evidence>
<evidence type="ECO:0000269" key="7">
    <source>
    </source>
</evidence>
<evidence type="ECO:0000269" key="8">
    <source>
    </source>
</evidence>
<evidence type="ECO:0000303" key="9">
    <source>
    </source>
</evidence>
<evidence type="ECO:0000303" key="10">
    <source>
    </source>
</evidence>
<evidence type="ECO:0000305" key="11"/>
<evidence type="ECO:0000305" key="12">
    <source>
    </source>
</evidence>
<evidence type="ECO:0000305" key="13">
    <source>
    </source>
</evidence>
<evidence type="ECO:0000305" key="14">
    <source>
    </source>
</evidence>
<evidence type="ECO:0000305" key="15">
    <source>
    </source>
</evidence>
<evidence type="ECO:0000312" key="16">
    <source>
        <dbReference type="MGI" id="MGI:1918244"/>
    </source>
</evidence>
<keyword id="KW-0025">Alternative splicing</keyword>
<keyword id="KW-0121">Carboxypeptidase</keyword>
<keyword id="KW-0966">Cell projection</keyword>
<keyword id="KW-0963">Cytoplasm</keyword>
<keyword id="KW-0206">Cytoskeleton</keyword>
<keyword id="KW-0333">Golgi apparatus</keyword>
<keyword id="KW-0378">Hydrolase</keyword>
<keyword id="KW-0479">Metal-binding</keyword>
<keyword id="KW-0482">Metalloprotease</keyword>
<keyword id="KW-0645">Protease</keyword>
<keyword id="KW-1185">Reference proteome</keyword>
<keyword id="KW-0862">Zinc</keyword>
<comment type="function">
    <text evidence="5 6 7 8">Metallocarboxypeptidase that mediates protein deglutamylation of tubulin and non-tubulin target proteins (PubMed:21074048, PubMed:25103237, PubMed:26829768, PubMed:29593216). Catalyzes the removal of polyglutamate side chains present on the gamma-carboxyl group of glutamate residues within the C-terminal tail of tubulin protein (PubMed:21074048, PubMed:25103237). Specifically cleaves tubulin long-side-chains, while it is not able to remove the branching point glutamate (PubMed:25103237). Also catalyzes the removal of polyglutamate residues from the carboxy-terminus of non-tubulin proteins such as MYLK (PubMed:21074048). Mediates the deglutamylation of nucleotidyltransferase CGAS, leading to CGAS antiviral defense response activation (PubMed:26829768). Involved in KLF4 deglutamylation which promotes KLF4 proteasome-mediated degradation, thereby negatively regulating cell pluripotency maintenance and embryogenesis (PubMed:29593216).</text>
</comment>
<comment type="catalytic activity">
    <reaction evidence="5 6 7 8">
        <text>(L-glutamyl)(n+1)-gamma-L-glutamyl-L-glutamyl-[protein] + H2O = (L-glutamyl)(n)-gamma-L-glutamyl-L-glutamyl-[protein] + L-glutamate</text>
        <dbReference type="Rhea" id="RHEA:60004"/>
        <dbReference type="Rhea" id="RHEA-COMP:15519"/>
        <dbReference type="Rhea" id="RHEA-COMP:15675"/>
        <dbReference type="ChEBI" id="CHEBI:15377"/>
        <dbReference type="ChEBI" id="CHEBI:29985"/>
        <dbReference type="ChEBI" id="CHEBI:143623"/>
    </reaction>
    <physiologicalReaction direction="left-to-right" evidence="12 13 14 15">
        <dbReference type="Rhea" id="RHEA:60005"/>
    </physiologicalReaction>
</comment>
<comment type="catalytic activity">
    <reaction evidence="5">
        <text>C-terminal L-alpha-aminoacyl-L-glutamyl-L-glutamyl-[tubulin] + H2O = C-terminal L-alpha-aminoacyl-L-glutamyl-[tubulin] + L-glutamate</text>
        <dbReference type="Rhea" id="RHEA:63792"/>
        <dbReference type="Rhea" id="RHEA-COMP:16435"/>
        <dbReference type="Rhea" id="RHEA-COMP:16436"/>
        <dbReference type="ChEBI" id="CHEBI:15377"/>
        <dbReference type="ChEBI" id="CHEBI:29985"/>
        <dbReference type="ChEBI" id="CHEBI:149555"/>
        <dbReference type="ChEBI" id="CHEBI:149556"/>
        <dbReference type="EC" id="3.4.17.24"/>
    </reaction>
    <physiologicalReaction direction="left-to-right" evidence="12">
        <dbReference type="Rhea" id="RHEA:63793"/>
    </physiologicalReaction>
</comment>
<comment type="cofactor">
    <cofactor evidence="1">
        <name>Zn(2+)</name>
        <dbReference type="ChEBI" id="CHEBI:29105"/>
    </cofactor>
    <text evidence="1">Binds 1 zinc ion per subunit.</text>
</comment>
<comment type="subunit">
    <text evidence="5">Interacts with MYLK.</text>
</comment>
<comment type="subcellular location">
    <subcellularLocation>
        <location evidence="4">Cytoplasm</location>
        <location evidence="4">Cytosol</location>
    </subcellularLocation>
    <subcellularLocation>
        <location evidence="2">Cytoplasm</location>
        <location evidence="2">Cytoskeleton</location>
        <location evidence="2">Microtubule organizing center</location>
        <location evidence="2">Centrosome</location>
        <location evidence="2">Centriole</location>
    </subcellularLocation>
    <subcellularLocation>
        <location evidence="2">Golgi apparatus</location>
    </subcellularLocation>
    <subcellularLocation>
        <location evidence="2">Cytoplasm</location>
        <location evidence="2">Cytoskeleton</location>
        <location evidence="2">Cilium basal body</location>
    </subcellularLocation>
    <text evidence="2">Colocalizes with gamma-tubulin in the centrioles at interphase and dividing cells and with glutamylated tubulin in basal bodies of ciliated cells.</text>
</comment>
<comment type="alternative products">
    <event type="alternative splicing"/>
    <isoform>
        <id>Q09LZ8-1</id>
        <name>1</name>
        <name>2</name>
        <sequence type="displayed"/>
    </isoform>
    <isoform>
        <id>Q09LZ8-2</id>
        <name>2</name>
        <name>1</name>
        <sequence type="described" ref="VSP_024671 VSP_024672"/>
    </isoform>
</comment>
<comment type="tissue specificity">
    <text evidence="4 5 6">Widely expressed. Expressed abundantly in testis, pituitary and brain and to a lower extent in eye, stomach, adrenal and kidney. In brain, expressed at low level in cerebellum as compared to cortex.</text>
</comment>
<comment type="disruption phenotype">
    <text evidence="7 8">Mice are more vulnerable to DNA virus infection due to impaired immune response. Knockout mice promote somatic cell reprogramming and higher litter size at birth (PubMed:29593216). Knockout blastocytes show enhanced development (PubMed:29593216).</text>
</comment>
<comment type="similarity">
    <text evidence="11">Belongs to the peptidase M14 family.</text>
</comment>
<comment type="sequence caution" evidence="11">
    <conflict type="erroneous gene model prediction">
        <sequence resource="EMBL-CDS" id="CAM13964"/>
    </conflict>
</comment>
<comment type="sequence caution" evidence="11">
    <conflict type="erroneous gene model prediction">
        <sequence resource="EMBL-CDS" id="CAM16884"/>
    </conflict>
</comment>
<comment type="sequence caution" evidence="11">
    <conflict type="erroneous gene model prediction">
        <sequence resource="EMBL-CDS" id="CAM16953"/>
    </conflict>
</comment>
<comment type="sequence caution" evidence="11">
    <conflict type="erroneous gene model prediction">
        <sequence resource="EMBL-CDS" id="CAM17710"/>
    </conflict>
</comment>
<comment type="sequence caution" evidence="11">
    <conflict type="erroneous gene model prediction">
        <sequence resource="EMBL-CDS" id="CAM17858"/>
    </conflict>
</comment>
<comment type="sequence caution" evidence="11">
    <conflict type="erroneous gene model prediction">
        <sequence resource="EMBL-CDS" id="CAM19669"/>
    </conflict>
</comment>
<comment type="sequence caution" evidence="11">
    <conflict type="erroneous gene model prediction">
        <sequence resource="EMBL-CDS" id="CAM21591"/>
    </conflict>
</comment>
<comment type="sequence caution" evidence="11">
    <conflict type="erroneous gene model prediction">
        <sequence resource="EMBL-CDS" id="CAM21666"/>
    </conflict>
</comment>
<proteinExistence type="evidence at protein level"/>
<dbReference type="EC" id="3.4.17.-" evidence="5 6 7 8"/>
<dbReference type="EC" id="3.4.17.24" evidence="5"/>
<dbReference type="EMBL" id="DQ867039">
    <property type="protein sequence ID" value="ABI51958.1"/>
    <property type="molecule type" value="mRNA"/>
</dbReference>
<dbReference type="EMBL" id="DQ867040">
    <property type="protein sequence ID" value="ABI51959.1"/>
    <property type="molecule type" value="mRNA"/>
</dbReference>
<dbReference type="EMBL" id="AL627347">
    <property type="protein sequence ID" value="CAM13964.1"/>
    <property type="status" value="ALT_SEQ"/>
    <property type="molecule type" value="Genomic_DNA"/>
</dbReference>
<dbReference type="EMBL" id="AL627183">
    <property type="protein sequence ID" value="CAM13964.1"/>
    <property type="status" value="JOINED"/>
    <property type="molecule type" value="Genomic_DNA"/>
</dbReference>
<dbReference type="EMBL" id="AL627425">
    <property type="protein sequence ID" value="CAM13964.1"/>
    <property type="status" value="JOINED"/>
    <property type="molecule type" value="Genomic_DNA"/>
</dbReference>
<dbReference type="EMBL" id="AL662829">
    <property type="protein sequence ID" value="CAM13964.1"/>
    <property type="status" value="JOINED"/>
    <property type="molecule type" value="Genomic_DNA"/>
</dbReference>
<dbReference type="EMBL" id="AL669940">
    <property type="protein sequence ID" value="CAM13964.1"/>
    <property type="status" value="JOINED"/>
    <property type="molecule type" value="Genomic_DNA"/>
</dbReference>
<dbReference type="EMBL" id="AL669959">
    <property type="protein sequence ID" value="CAM13964.1"/>
    <property type="status" value="JOINED"/>
    <property type="molecule type" value="Genomic_DNA"/>
</dbReference>
<dbReference type="EMBL" id="AL669965">
    <property type="protein sequence ID" value="CAM13964.1"/>
    <property type="status" value="JOINED"/>
    <property type="molecule type" value="Genomic_DNA"/>
</dbReference>
<dbReference type="EMBL" id="AL671895">
    <property type="protein sequence ID" value="CAM13964.1"/>
    <property type="status" value="JOINED"/>
    <property type="molecule type" value="Genomic_DNA"/>
</dbReference>
<dbReference type="EMBL" id="AL669965">
    <property type="protein sequence ID" value="CAM16884.1"/>
    <property type="status" value="ALT_SEQ"/>
    <property type="molecule type" value="Genomic_DNA"/>
</dbReference>
<dbReference type="EMBL" id="AL627183">
    <property type="protein sequence ID" value="CAM16884.1"/>
    <property type="status" value="JOINED"/>
    <property type="molecule type" value="Genomic_DNA"/>
</dbReference>
<dbReference type="EMBL" id="AL627347">
    <property type="protein sequence ID" value="CAM16884.1"/>
    <property type="status" value="JOINED"/>
    <property type="molecule type" value="Genomic_DNA"/>
</dbReference>
<dbReference type="EMBL" id="AL627425">
    <property type="protein sequence ID" value="CAM16884.1"/>
    <property type="status" value="JOINED"/>
    <property type="molecule type" value="Genomic_DNA"/>
</dbReference>
<dbReference type="EMBL" id="AL662829">
    <property type="protein sequence ID" value="CAM16884.1"/>
    <property type="status" value="JOINED"/>
    <property type="molecule type" value="Genomic_DNA"/>
</dbReference>
<dbReference type="EMBL" id="AL669940">
    <property type="protein sequence ID" value="CAM16884.1"/>
    <property type="status" value="JOINED"/>
    <property type="molecule type" value="Genomic_DNA"/>
</dbReference>
<dbReference type="EMBL" id="AL669959">
    <property type="protein sequence ID" value="CAM16884.1"/>
    <property type="status" value="JOINED"/>
    <property type="molecule type" value="Genomic_DNA"/>
</dbReference>
<dbReference type="EMBL" id="AL671895">
    <property type="protein sequence ID" value="CAM16884.1"/>
    <property type="status" value="JOINED"/>
    <property type="molecule type" value="Genomic_DNA"/>
</dbReference>
<dbReference type="EMBL" id="AL662829">
    <property type="protein sequence ID" value="CAM16953.1"/>
    <property type="status" value="ALT_SEQ"/>
    <property type="molecule type" value="Genomic_DNA"/>
</dbReference>
<dbReference type="EMBL" id="AL627183">
    <property type="protein sequence ID" value="CAM16953.1"/>
    <property type="status" value="JOINED"/>
    <property type="molecule type" value="Genomic_DNA"/>
</dbReference>
<dbReference type="EMBL" id="AL627347">
    <property type="protein sequence ID" value="CAM16953.1"/>
    <property type="status" value="JOINED"/>
    <property type="molecule type" value="Genomic_DNA"/>
</dbReference>
<dbReference type="EMBL" id="AL627425">
    <property type="protein sequence ID" value="CAM16953.1"/>
    <property type="status" value="JOINED"/>
    <property type="molecule type" value="Genomic_DNA"/>
</dbReference>
<dbReference type="EMBL" id="AL669940">
    <property type="protein sequence ID" value="CAM16953.1"/>
    <property type="status" value="JOINED"/>
    <property type="molecule type" value="Genomic_DNA"/>
</dbReference>
<dbReference type="EMBL" id="AL669959">
    <property type="protein sequence ID" value="CAM16953.1"/>
    <property type="status" value="JOINED"/>
    <property type="molecule type" value="Genomic_DNA"/>
</dbReference>
<dbReference type="EMBL" id="AL669965">
    <property type="protein sequence ID" value="CAM16953.1"/>
    <property type="status" value="JOINED"/>
    <property type="molecule type" value="Genomic_DNA"/>
</dbReference>
<dbReference type="EMBL" id="AL671895">
    <property type="protein sequence ID" value="CAM16953.1"/>
    <property type="status" value="JOINED"/>
    <property type="molecule type" value="Genomic_DNA"/>
</dbReference>
<dbReference type="EMBL" id="AL669940">
    <property type="protein sequence ID" value="CAM17710.1"/>
    <property type="status" value="ALT_SEQ"/>
    <property type="molecule type" value="Genomic_DNA"/>
</dbReference>
<dbReference type="EMBL" id="AL627183">
    <property type="protein sequence ID" value="CAM17710.1"/>
    <property type="status" value="JOINED"/>
    <property type="molecule type" value="Genomic_DNA"/>
</dbReference>
<dbReference type="EMBL" id="AL627347">
    <property type="protein sequence ID" value="CAM17710.1"/>
    <property type="status" value="JOINED"/>
    <property type="molecule type" value="Genomic_DNA"/>
</dbReference>
<dbReference type="EMBL" id="AL627425">
    <property type="protein sequence ID" value="CAM17710.1"/>
    <property type="status" value="JOINED"/>
    <property type="molecule type" value="Genomic_DNA"/>
</dbReference>
<dbReference type="EMBL" id="AL662829">
    <property type="protein sequence ID" value="CAM17710.1"/>
    <property type="status" value="JOINED"/>
    <property type="molecule type" value="Genomic_DNA"/>
</dbReference>
<dbReference type="EMBL" id="AL669959">
    <property type="protein sequence ID" value="CAM17710.1"/>
    <property type="status" value="JOINED"/>
    <property type="molecule type" value="Genomic_DNA"/>
</dbReference>
<dbReference type="EMBL" id="AL669965">
    <property type="protein sequence ID" value="CAM17710.1"/>
    <property type="status" value="JOINED"/>
    <property type="molecule type" value="Genomic_DNA"/>
</dbReference>
<dbReference type="EMBL" id="AL671895">
    <property type="protein sequence ID" value="CAM17710.1"/>
    <property type="status" value="JOINED"/>
    <property type="molecule type" value="Genomic_DNA"/>
</dbReference>
<dbReference type="EMBL" id="AL669959">
    <property type="protein sequence ID" value="CAM17858.1"/>
    <property type="status" value="ALT_SEQ"/>
    <property type="molecule type" value="Genomic_DNA"/>
</dbReference>
<dbReference type="EMBL" id="AL627183">
    <property type="protein sequence ID" value="CAM17858.1"/>
    <property type="status" value="JOINED"/>
    <property type="molecule type" value="Genomic_DNA"/>
</dbReference>
<dbReference type="EMBL" id="AL627347">
    <property type="protein sequence ID" value="CAM17858.1"/>
    <property type="status" value="JOINED"/>
    <property type="molecule type" value="Genomic_DNA"/>
</dbReference>
<dbReference type="EMBL" id="AL627425">
    <property type="protein sequence ID" value="CAM17858.1"/>
    <property type="status" value="JOINED"/>
    <property type="molecule type" value="Genomic_DNA"/>
</dbReference>
<dbReference type="EMBL" id="AL662829">
    <property type="protein sequence ID" value="CAM17858.1"/>
    <property type="status" value="JOINED"/>
    <property type="molecule type" value="Genomic_DNA"/>
</dbReference>
<dbReference type="EMBL" id="AL669940">
    <property type="protein sequence ID" value="CAM17858.1"/>
    <property type="status" value="JOINED"/>
    <property type="molecule type" value="Genomic_DNA"/>
</dbReference>
<dbReference type="EMBL" id="AL669965">
    <property type="protein sequence ID" value="CAM17858.1"/>
    <property type="status" value="JOINED"/>
    <property type="molecule type" value="Genomic_DNA"/>
</dbReference>
<dbReference type="EMBL" id="AL671895">
    <property type="protein sequence ID" value="CAM17858.1"/>
    <property type="status" value="JOINED"/>
    <property type="molecule type" value="Genomic_DNA"/>
</dbReference>
<dbReference type="EMBL" id="AL627425">
    <property type="protein sequence ID" value="CAM19669.1"/>
    <property type="status" value="ALT_SEQ"/>
    <property type="molecule type" value="Genomic_DNA"/>
</dbReference>
<dbReference type="EMBL" id="AL627183">
    <property type="protein sequence ID" value="CAM19669.1"/>
    <property type="status" value="JOINED"/>
    <property type="molecule type" value="Genomic_DNA"/>
</dbReference>
<dbReference type="EMBL" id="AL627347">
    <property type="protein sequence ID" value="CAM19669.1"/>
    <property type="status" value="JOINED"/>
    <property type="molecule type" value="Genomic_DNA"/>
</dbReference>
<dbReference type="EMBL" id="AL662829">
    <property type="protein sequence ID" value="CAM19669.1"/>
    <property type="status" value="JOINED"/>
    <property type="molecule type" value="Genomic_DNA"/>
</dbReference>
<dbReference type="EMBL" id="AL669940">
    <property type="protein sequence ID" value="CAM19669.1"/>
    <property type="status" value="JOINED"/>
    <property type="molecule type" value="Genomic_DNA"/>
</dbReference>
<dbReference type="EMBL" id="AL669959">
    <property type="protein sequence ID" value="CAM19669.1"/>
    <property type="status" value="JOINED"/>
    <property type="molecule type" value="Genomic_DNA"/>
</dbReference>
<dbReference type="EMBL" id="AL669965">
    <property type="protein sequence ID" value="CAM19669.1"/>
    <property type="status" value="JOINED"/>
    <property type="molecule type" value="Genomic_DNA"/>
</dbReference>
<dbReference type="EMBL" id="AL671895">
    <property type="protein sequence ID" value="CAM19669.1"/>
    <property type="status" value="JOINED"/>
    <property type="molecule type" value="Genomic_DNA"/>
</dbReference>
<dbReference type="EMBL" id="AL671895">
    <property type="protein sequence ID" value="CAM21591.1"/>
    <property type="status" value="ALT_SEQ"/>
    <property type="molecule type" value="Genomic_DNA"/>
</dbReference>
<dbReference type="EMBL" id="AL627183">
    <property type="protein sequence ID" value="CAM21591.1"/>
    <property type="status" value="JOINED"/>
    <property type="molecule type" value="Genomic_DNA"/>
</dbReference>
<dbReference type="EMBL" id="AL627347">
    <property type="protein sequence ID" value="CAM21591.1"/>
    <property type="status" value="JOINED"/>
    <property type="molecule type" value="Genomic_DNA"/>
</dbReference>
<dbReference type="EMBL" id="AL627425">
    <property type="protein sequence ID" value="CAM21591.1"/>
    <property type="status" value="JOINED"/>
    <property type="molecule type" value="Genomic_DNA"/>
</dbReference>
<dbReference type="EMBL" id="AL662829">
    <property type="protein sequence ID" value="CAM21591.1"/>
    <property type="status" value="JOINED"/>
    <property type="molecule type" value="Genomic_DNA"/>
</dbReference>
<dbReference type="EMBL" id="AL669940">
    <property type="protein sequence ID" value="CAM21591.1"/>
    <property type="status" value="JOINED"/>
    <property type="molecule type" value="Genomic_DNA"/>
</dbReference>
<dbReference type="EMBL" id="AL669959">
    <property type="protein sequence ID" value="CAM21591.1"/>
    <property type="status" value="JOINED"/>
    <property type="molecule type" value="Genomic_DNA"/>
</dbReference>
<dbReference type="EMBL" id="AL669965">
    <property type="protein sequence ID" value="CAM21591.1"/>
    <property type="status" value="JOINED"/>
    <property type="molecule type" value="Genomic_DNA"/>
</dbReference>
<dbReference type="EMBL" id="AL627183">
    <property type="protein sequence ID" value="CAM21666.1"/>
    <property type="status" value="ALT_SEQ"/>
    <property type="molecule type" value="Genomic_DNA"/>
</dbReference>
<dbReference type="EMBL" id="AL627347">
    <property type="protein sequence ID" value="CAM21666.1"/>
    <property type="status" value="JOINED"/>
    <property type="molecule type" value="Genomic_DNA"/>
</dbReference>
<dbReference type="EMBL" id="AL627425">
    <property type="protein sequence ID" value="CAM21666.1"/>
    <property type="status" value="JOINED"/>
    <property type="molecule type" value="Genomic_DNA"/>
</dbReference>
<dbReference type="EMBL" id="AL662829">
    <property type="protein sequence ID" value="CAM21666.1"/>
    <property type="status" value="JOINED"/>
    <property type="molecule type" value="Genomic_DNA"/>
</dbReference>
<dbReference type="EMBL" id="AL669940">
    <property type="protein sequence ID" value="CAM21666.1"/>
    <property type="status" value="JOINED"/>
    <property type="molecule type" value="Genomic_DNA"/>
</dbReference>
<dbReference type="EMBL" id="AL669959">
    <property type="protein sequence ID" value="CAM21666.1"/>
    <property type="status" value="JOINED"/>
    <property type="molecule type" value="Genomic_DNA"/>
</dbReference>
<dbReference type="EMBL" id="AL669965">
    <property type="protein sequence ID" value="CAM21666.1"/>
    <property type="status" value="JOINED"/>
    <property type="molecule type" value="Genomic_DNA"/>
</dbReference>
<dbReference type="EMBL" id="AL671895">
    <property type="protein sequence ID" value="CAM21666.1"/>
    <property type="status" value="JOINED"/>
    <property type="molecule type" value="Genomic_DNA"/>
</dbReference>
<dbReference type="EMBL" id="AL627425">
    <property type="protein sequence ID" value="CAO77735.1"/>
    <property type="molecule type" value="Genomic_DNA"/>
</dbReference>
<dbReference type="EMBL" id="AL627183">
    <property type="protein sequence ID" value="CAO77735.1"/>
    <property type="status" value="JOINED"/>
    <property type="molecule type" value="Genomic_DNA"/>
</dbReference>
<dbReference type="EMBL" id="AL627347">
    <property type="protein sequence ID" value="CAO77735.1"/>
    <property type="status" value="JOINED"/>
    <property type="molecule type" value="Genomic_DNA"/>
</dbReference>
<dbReference type="EMBL" id="AL662829">
    <property type="protein sequence ID" value="CAO77735.1"/>
    <property type="status" value="JOINED"/>
    <property type="molecule type" value="Genomic_DNA"/>
</dbReference>
<dbReference type="EMBL" id="AL669940">
    <property type="protein sequence ID" value="CAO77735.1"/>
    <property type="status" value="JOINED"/>
    <property type="molecule type" value="Genomic_DNA"/>
</dbReference>
<dbReference type="EMBL" id="AL669959">
    <property type="protein sequence ID" value="CAO77735.1"/>
    <property type="status" value="JOINED"/>
    <property type="molecule type" value="Genomic_DNA"/>
</dbReference>
<dbReference type="EMBL" id="AL669965">
    <property type="protein sequence ID" value="CAO77735.1"/>
    <property type="status" value="JOINED"/>
    <property type="molecule type" value="Genomic_DNA"/>
</dbReference>
<dbReference type="EMBL" id="AL671895">
    <property type="protein sequence ID" value="CAO77735.1"/>
    <property type="status" value="JOINED"/>
    <property type="molecule type" value="Genomic_DNA"/>
</dbReference>
<dbReference type="EMBL" id="AL669940">
    <property type="protein sequence ID" value="CAO77918.1"/>
    <property type="molecule type" value="Genomic_DNA"/>
</dbReference>
<dbReference type="EMBL" id="AL627183">
    <property type="protein sequence ID" value="CAO77918.1"/>
    <property type="status" value="JOINED"/>
    <property type="molecule type" value="Genomic_DNA"/>
</dbReference>
<dbReference type="EMBL" id="AL627347">
    <property type="protein sequence ID" value="CAO77918.1"/>
    <property type="status" value="JOINED"/>
    <property type="molecule type" value="Genomic_DNA"/>
</dbReference>
<dbReference type="EMBL" id="AL627425">
    <property type="protein sequence ID" value="CAO77918.1"/>
    <property type="status" value="JOINED"/>
    <property type="molecule type" value="Genomic_DNA"/>
</dbReference>
<dbReference type="EMBL" id="AL662829">
    <property type="protein sequence ID" value="CAO77918.1"/>
    <property type="status" value="JOINED"/>
    <property type="molecule type" value="Genomic_DNA"/>
</dbReference>
<dbReference type="EMBL" id="AL669959">
    <property type="protein sequence ID" value="CAO77918.1"/>
    <property type="status" value="JOINED"/>
    <property type="molecule type" value="Genomic_DNA"/>
</dbReference>
<dbReference type="EMBL" id="AL669965">
    <property type="protein sequence ID" value="CAO77918.1"/>
    <property type="status" value="JOINED"/>
    <property type="molecule type" value="Genomic_DNA"/>
</dbReference>
<dbReference type="EMBL" id="AL671895">
    <property type="protein sequence ID" value="CAO77918.1"/>
    <property type="status" value="JOINED"/>
    <property type="molecule type" value="Genomic_DNA"/>
</dbReference>
<dbReference type="EMBL" id="AL669959">
    <property type="protein sequence ID" value="CAO77920.1"/>
    <property type="molecule type" value="Genomic_DNA"/>
</dbReference>
<dbReference type="EMBL" id="AL627183">
    <property type="protein sequence ID" value="CAO77920.1"/>
    <property type="status" value="JOINED"/>
    <property type="molecule type" value="Genomic_DNA"/>
</dbReference>
<dbReference type="EMBL" id="AL627347">
    <property type="protein sequence ID" value="CAO77920.1"/>
    <property type="status" value="JOINED"/>
    <property type="molecule type" value="Genomic_DNA"/>
</dbReference>
<dbReference type="EMBL" id="AL627425">
    <property type="protein sequence ID" value="CAO77920.1"/>
    <property type="status" value="JOINED"/>
    <property type="molecule type" value="Genomic_DNA"/>
</dbReference>
<dbReference type="EMBL" id="AL662829">
    <property type="protein sequence ID" value="CAO77920.1"/>
    <property type="status" value="JOINED"/>
    <property type="molecule type" value="Genomic_DNA"/>
</dbReference>
<dbReference type="EMBL" id="AL669940">
    <property type="protein sequence ID" value="CAO77920.1"/>
    <property type="status" value="JOINED"/>
    <property type="molecule type" value="Genomic_DNA"/>
</dbReference>
<dbReference type="EMBL" id="AL669965">
    <property type="protein sequence ID" value="CAO77920.1"/>
    <property type="status" value="JOINED"/>
    <property type="molecule type" value="Genomic_DNA"/>
</dbReference>
<dbReference type="EMBL" id="AL671895">
    <property type="protein sequence ID" value="CAO77920.1"/>
    <property type="status" value="JOINED"/>
    <property type="molecule type" value="Genomic_DNA"/>
</dbReference>
<dbReference type="EMBL" id="AL671895">
    <property type="protein sequence ID" value="CAO78078.1"/>
    <property type="molecule type" value="Genomic_DNA"/>
</dbReference>
<dbReference type="EMBL" id="AL627183">
    <property type="protein sequence ID" value="CAO78078.1"/>
    <property type="status" value="JOINED"/>
    <property type="molecule type" value="Genomic_DNA"/>
</dbReference>
<dbReference type="EMBL" id="AL627347">
    <property type="protein sequence ID" value="CAO78078.1"/>
    <property type="status" value="JOINED"/>
    <property type="molecule type" value="Genomic_DNA"/>
</dbReference>
<dbReference type="EMBL" id="AL627425">
    <property type="protein sequence ID" value="CAO78078.1"/>
    <property type="status" value="JOINED"/>
    <property type="molecule type" value="Genomic_DNA"/>
</dbReference>
<dbReference type="EMBL" id="AL662829">
    <property type="protein sequence ID" value="CAO78078.1"/>
    <property type="status" value="JOINED"/>
    <property type="molecule type" value="Genomic_DNA"/>
</dbReference>
<dbReference type="EMBL" id="AL669940">
    <property type="protein sequence ID" value="CAO78078.1"/>
    <property type="status" value="JOINED"/>
    <property type="molecule type" value="Genomic_DNA"/>
</dbReference>
<dbReference type="EMBL" id="AL669959">
    <property type="protein sequence ID" value="CAO78078.1"/>
    <property type="status" value="JOINED"/>
    <property type="molecule type" value="Genomic_DNA"/>
</dbReference>
<dbReference type="EMBL" id="AL669965">
    <property type="protein sequence ID" value="CAO78078.1"/>
    <property type="status" value="JOINED"/>
    <property type="molecule type" value="Genomic_DNA"/>
</dbReference>
<dbReference type="EMBL" id="AL662829">
    <property type="protein sequence ID" value="CAO78121.1"/>
    <property type="molecule type" value="Genomic_DNA"/>
</dbReference>
<dbReference type="EMBL" id="AL627183">
    <property type="protein sequence ID" value="CAO78121.1"/>
    <property type="status" value="JOINED"/>
    <property type="molecule type" value="Genomic_DNA"/>
</dbReference>
<dbReference type="EMBL" id="AL627347">
    <property type="protein sequence ID" value="CAO78121.1"/>
    <property type="status" value="JOINED"/>
    <property type="molecule type" value="Genomic_DNA"/>
</dbReference>
<dbReference type="EMBL" id="AL627425">
    <property type="protein sequence ID" value="CAO78121.1"/>
    <property type="status" value="JOINED"/>
    <property type="molecule type" value="Genomic_DNA"/>
</dbReference>
<dbReference type="EMBL" id="AL669940">
    <property type="protein sequence ID" value="CAO78121.1"/>
    <property type="status" value="JOINED"/>
    <property type="molecule type" value="Genomic_DNA"/>
</dbReference>
<dbReference type="EMBL" id="AL669959">
    <property type="protein sequence ID" value="CAO78121.1"/>
    <property type="status" value="JOINED"/>
    <property type="molecule type" value="Genomic_DNA"/>
</dbReference>
<dbReference type="EMBL" id="AL669965">
    <property type="protein sequence ID" value="CAO78121.1"/>
    <property type="status" value="JOINED"/>
    <property type="molecule type" value="Genomic_DNA"/>
</dbReference>
<dbReference type="EMBL" id="AL671895">
    <property type="protein sequence ID" value="CAO78121.1"/>
    <property type="status" value="JOINED"/>
    <property type="molecule type" value="Genomic_DNA"/>
</dbReference>
<dbReference type="EMBL" id="AL627183">
    <property type="protein sequence ID" value="CAP19222.1"/>
    <property type="molecule type" value="Genomic_DNA"/>
</dbReference>
<dbReference type="EMBL" id="AL627347">
    <property type="protein sequence ID" value="CAP19222.1"/>
    <property type="status" value="JOINED"/>
    <property type="molecule type" value="Genomic_DNA"/>
</dbReference>
<dbReference type="EMBL" id="AL627425">
    <property type="protein sequence ID" value="CAP19222.1"/>
    <property type="status" value="JOINED"/>
    <property type="molecule type" value="Genomic_DNA"/>
</dbReference>
<dbReference type="EMBL" id="AL662829">
    <property type="protein sequence ID" value="CAP19222.1"/>
    <property type="status" value="JOINED"/>
    <property type="molecule type" value="Genomic_DNA"/>
</dbReference>
<dbReference type="EMBL" id="AL669940">
    <property type="protein sequence ID" value="CAP19222.1"/>
    <property type="status" value="JOINED"/>
    <property type="molecule type" value="Genomic_DNA"/>
</dbReference>
<dbReference type="EMBL" id="AL669959">
    <property type="protein sequence ID" value="CAP19222.1"/>
    <property type="status" value="JOINED"/>
    <property type="molecule type" value="Genomic_DNA"/>
</dbReference>
<dbReference type="EMBL" id="AL669965">
    <property type="protein sequence ID" value="CAP19222.1"/>
    <property type="status" value="JOINED"/>
    <property type="molecule type" value="Genomic_DNA"/>
</dbReference>
<dbReference type="EMBL" id="AL671895">
    <property type="protein sequence ID" value="CAP19222.1"/>
    <property type="status" value="JOINED"/>
    <property type="molecule type" value="Genomic_DNA"/>
</dbReference>
<dbReference type="EMBL" id="AL627347">
    <property type="protein sequence ID" value="CAQ11261.1"/>
    <property type="molecule type" value="Genomic_DNA"/>
</dbReference>
<dbReference type="EMBL" id="AL627183">
    <property type="protein sequence ID" value="CAQ11261.1"/>
    <property type="status" value="JOINED"/>
    <property type="molecule type" value="Genomic_DNA"/>
</dbReference>
<dbReference type="EMBL" id="AL627425">
    <property type="protein sequence ID" value="CAQ11261.1"/>
    <property type="status" value="JOINED"/>
    <property type="molecule type" value="Genomic_DNA"/>
</dbReference>
<dbReference type="EMBL" id="AL662829">
    <property type="protein sequence ID" value="CAQ11261.1"/>
    <property type="status" value="JOINED"/>
    <property type="molecule type" value="Genomic_DNA"/>
</dbReference>
<dbReference type="EMBL" id="AL669940">
    <property type="protein sequence ID" value="CAQ11261.1"/>
    <property type="status" value="JOINED"/>
    <property type="molecule type" value="Genomic_DNA"/>
</dbReference>
<dbReference type="EMBL" id="AL669959">
    <property type="protein sequence ID" value="CAQ11261.1"/>
    <property type="status" value="JOINED"/>
    <property type="molecule type" value="Genomic_DNA"/>
</dbReference>
<dbReference type="EMBL" id="AL669965">
    <property type="protein sequence ID" value="CAQ11261.1"/>
    <property type="status" value="JOINED"/>
    <property type="molecule type" value="Genomic_DNA"/>
</dbReference>
<dbReference type="EMBL" id="AL671895">
    <property type="protein sequence ID" value="CAQ11261.1"/>
    <property type="status" value="JOINED"/>
    <property type="molecule type" value="Genomic_DNA"/>
</dbReference>
<dbReference type="EMBL" id="AL669965">
    <property type="protein sequence ID" value="CAQ13051.1"/>
    <property type="molecule type" value="Genomic_DNA"/>
</dbReference>
<dbReference type="EMBL" id="AL627183">
    <property type="protein sequence ID" value="CAQ13051.1"/>
    <property type="status" value="JOINED"/>
    <property type="molecule type" value="Genomic_DNA"/>
</dbReference>
<dbReference type="EMBL" id="AL627347">
    <property type="protein sequence ID" value="CAQ13051.1"/>
    <property type="status" value="JOINED"/>
    <property type="molecule type" value="Genomic_DNA"/>
</dbReference>
<dbReference type="EMBL" id="AL627425">
    <property type="protein sequence ID" value="CAQ13051.1"/>
    <property type="status" value="JOINED"/>
    <property type="molecule type" value="Genomic_DNA"/>
</dbReference>
<dbReference type="EMBL" id="AL662829">
    <property type="protein sequence ID" value="CAQ13051.1"/>
    <property type="status" value="JOINED"/>
    <property type="molecule type" value="Genomic_DNA"/>
</dbReference>
<dbReference type="EMBL" id="AL669940">
    <property type="protein sequence ID" value="CAQ13051.1"/>
    <property type="status" value="JOINED"/>
    <property type="molecule type" value="Genomic_DNA"/>
</dbReference>
<dbReference type="EMBL" id="AL669959">
    <property type="protein sequence ID" value="CAQ13051.1"/>
    <property type="status" value="JOINED"/>
    <property type="molecule type" value="Genomic_DNA"/>
</dbReference>
<dbReference type="EMBL" id="AL671895">
    <property type="protein sequence ID" value="CAQ13051.1"/>
    <property type="status" value="JOINED"/>
    <property type="molecule type" value="Genomic_DNA"/>
</dbReference>
<dbReference type="EMBL" id="AL627425">
    <property type="protein sequence ID" value="CAO77734.1"/>
    <property type="molecule type" value="Genomic_DNA"/>
</dbReference>
<dbReference type="EMBL" id="AL627183">
    <property type="protein sequence ID" value="CAO77734.1"/>
    <property type="status" value="JOINED"/>
    <property type="molecule type" value="Genomic_DNA"/>
</dbReference>
<dbReference type="EMBL" id="AL627347">
    <property type="protein sequence ID" value="CAO77734.1"/>
    <property type="status" value="JOINED"/>
    <property type="molecule type" value="Genomic_DNA"/>
</dbReference>
<dbReference type="EMBL" id="AL662829">
    <property type="protein sequence ID" value="CAO77734.1"/>
    <property type="status" value="JOINED"/>
    <property type="molecule type" value="Genomic_DNA"/>
</dbReference>
<dbReference type="EMBL" id="AL669940">
    <property type="protein sequence ID" value="CAO77734.1"/>
    <property type="status" value="JOINED"/>
    <property type="molecule type" value="Genomic_DNA"/>
</dbReference>
<dbReference type="EMBL" id="AL669959">
    <property type="protein sequence ID" value="CAO77734.1"/>
    <property type="status" value="JOINED"/>
    <property type="molecule type" value="Genomic_DNA"/>
</dbReference>
<dbReference type="EMBL" id="AL669965">
    <property type="protein sequence ID" value="CAO77734.1"/>
    <property type="status" value="JOINED"/>
    <property type="molecule type" value="Genomic_DNA"/>
</dbReference>
<dbReference type="EMBL" id="AL671895">
    <property type="protein sequence ID" value="CAO77734.1"/>
    <property type="status" value="JOINED"/>
    <property type="molecule type" value="Genomic_DNA"/>
</dbReference>
<dbReference type="EMBL" id="AL669940">
    <property type="protein sequence ID" value="CAO77917.1"/>
    <property type="molecule type" value="Genomic_DNA"/>
</dbReference>
<dbReference type="EMBL" id="AL627183">
    <property type="protein sequence ID" value="CAO77917.1"/>
    <property type="status" value="JOINED"/>
    <property type="molecule type" value="Genomic_DNA"/>
</dbReference>
<dbReference type="EMBL" id="AL627347">
    <property type="protein sequence ID" value="CAO77917.1"/>
    <property type="status" value="JOINED"/>
    <property type="molecule type" value="Genomic_DNA"/>
</dbReference>
<dbReference type="EMBL" id="AL627425">
    <property type="protein sequence ID" value="CAO77917.1"/>
    <property type="status" value="JOINED"/>
    <property type="molecule type" value="Genomic_DNA"/>
</dbReference>
<dbReference type="EMBL" id="AL662829">
    <property type="protein sequence ID" value="CAO77917.1"/>
    <property type="status" value="JOINED"/>
    <property type="molecule type" value="Genomic_DNA"/>
</dbReference>
<dbReference type="EMBL" id="AL669959">
    <property type="protein sequence ID" value="CAO77917.1"/>
    <property type="status" value="JOINED"/>
    <property type="molecule type" value="Genomic_DNA"/>
</dbReference>
<dbReference type="EMBL" id="AL669965">
    <property type="protein sequence ID" value="CAO77917.1"/>
    <property type="status" value="JOINED"/>
    <property type="molecule type" value="Genomic_DNA"/>
</dbReference>
<dbReference type="EMBL" id="AL671895">
    <property type="protein sequence ID" value="CAO77917.1"/>
    <property type="status" value="JOINED"/>
    <property type="molecule type" value="Genomic_DNA"/>
</dbReference>
<dbReference type="EMBL" id="AL669959">
    <property type="protein sequence ID" value="CAO77919.1"/>
    <property type="molecule type" value="Genomic_DNA"/>
</dbReference>
<dbReference type="EMBL" id="AL627183">
    <property type="protein sequence ID" value="CAO77919.1"/>
    <property type="status" value="JOINED"/>
    <property type="molecule type" value="Genomic_DNA"/>
</dbReference>
<dbReference type="EMBL" id="AL627347">
    <property type="protein sequence ID" value="CAO77919.1"/>
    <property type="status" value="JOINED"/>
    <property type="molecule type" value="Genomic_DNA"/>
</dbReference>
<dbReference type="EMBL" id="AL627425">
    <property type="protein sequence ID" value="CAO77919.1"/>
    <property type="status" value="JOINED"/>
    <property type="molecule type" value="Genomic_DNA"/>
</dbReference>
<dbReference type="EMBL" id="AL662829">
    <property type="protein sequence ID" value="CAO77919.1"/>
    <property type="status" value="JOINED"/>
    <property type="molecule type" value="Genomic_DNA"/>
</dbReference>
<dbReference type="EMBL" id="AL669940">
    <property type="protein sequence ID" value="CAO77919.1"/>
    <property type="status" value="JOINED"/>
    <property type="molecule type" value="Genomic_DNA"/>
</dbReference>
<dbReference type="EMBL" id="AL669965">
    <property type="protein sequence ID" value="CAO77919.1"/>
    <property type="status" value="JOINED"/>
    <property type="molecule type" value="Genomic_DNA"/>
</dbReference>
<dbReference type="EMBL" id="AL671895">
    <property type="protein sequence ID" value="CAO77919.1"/>
    <property type="status" value="JOINED"/>
    <property type="molecule type" value="Genomic_DNA"/>
</dbReference>
<dbReference type="EMBL" id="AL671895">
    <property type="protein sequence ID" value="CAO78077.1"/>
    <property type="molecule type" value="Genomic_DNA"/>
</dbReference>
<dbReference type="EMBL" id="AL627183">
    <property type="protein sequence ID" value="CAO78077.1"/>
    <property type="status" value="JOINED"/>
    <property type="molecule type" value="Genomic_DNA"/>
</dbReference>
<dbReference type="EMBL" id="AL627347">
    <property type="protein sequence ID" value="CAO78077.1"/>
    <property type="status" value="JOINED"/>
    <property type="molecule type" value="Genomic_DNA"/>
</dbReference>
<dbReference type="EMBL" id="AL627425">
    <property type="protein sequence ID" value="CAO78077.1"/>
    <property type="status" value="JOINED"/>
    <property type="molecule type" value="Genomic_DNA"/>
</dbReference>
<dbReference type="EMBL" id="AL662829">
    <property type="protein sequence ID" value="CAO78077.1"/>
    <property type="status" value="JOINED"/>
    <property type="molecule type" value="Genomic_DNA"/>
</dbReference>
<dbReference type="EMBL" id="AL669940">
    <property type="protein sequence ID" value="CAO78077.1"/>
    <property type="status" value="JOINED"/>
    <property type="molecule type" value="Genomic_DNA"/>
</dbReference>
<dbReference type="EMBL" id="AL669959">
    <property type="protein sequence ID" value="CAO78077.1"/>
    <property type="status" value="JOINED"/>
    <property type="molecule type" value="Genomic_DNA"/>
</dbReference>
<dbReference type="EMBL" id="AL669965">
    <property type="protein sequence ID" value="CAO78077.1"/>
    <property type="status" value="JOINED"/>
    <property type="molecule type" value="Genomic_DNA"/>
</dbReference>
<dbReference type="EMBL" id="AL662829">
    <property type="protein sequence ID" value="CAO78120.1"/>
    <property type="molecule type" value="Genomic_DNA"/>
</dbReference>
<dbReference type="EMBL" id="AL627183">
    <property type="protein sequence ID" value="CAO78120.1"/>
    <property type="status" value="JOINED"/>
    <property type="molecule type" value="Genomic_DNA"/>
</dbReference>
<dbReference type="EMBL" id="AL627347">
    <property type="protein sequence ID" value="CAO78120.1"/>
    <property type="status" value="JOINED"/>
    <property type="molecule type" value="Genomic_DNA"/>
</dbReference>
<dbReference type="EMBL" id="AL627425">
    <property type="protein sequence ID" value="CAO78120.1"/>
    <property type="status" value="JOINED"/>
    <property type="molecule type" value="Genomic_DNA"/>
</dbReference>
<dbReference type="EMBL" id="AL669940">
    <property type="protein sequence ID" value="CAO78120.1"/>
    <property type="status" value="JOINED"/>
    <property type="molecule type" value="Genomic_DNA"/>
</dbReference>
<dbReference type="EMBL" id="AL669959">
    <property type="protein sequence ID" value="CAO78120.1"/>
    <property type="status" value="JOINED"/>
    <property type="molecule type" value="Genomic_DNA"/>
</dbReference>
<dbReference type="EMBL" id="AL669965">
    <property type="protein sequence ID" value="CAO78120.1"/>
    <property type="status" value="JOINED"/>
    <property type="molecule type" value="Genomic_DNA"/>
</dbReference>
<dbReference type="EMBL" id="AL671895">
    <property type="protein sequence ID" value="CAO78120.1"/>
    <property type="status" value="JOINED"/>
    <property type="molecule type" value="Genomic_DNA"/>
</dbReference>
<dbReference type="EMBL" id="AL627183">
    <property type="protein sequence ID" value="CAP19221.1"/>
    <property type="molecule type" value="Genomic_DNA"/>
</dbReference>
<dbReference type="EMBL" id="AL627347">
    <property type="protein sequence ID" value="CAP19221.1"/>
    <property type="status" value="JOINED"/>
    <property type="molecule type" value="Genomic_DNA"/>
</dbReference>
<dbReference type="EMBL" id="AL627425">
    <property type="protein sequence ID" value="CAP19221.1"/>
    <property type="status" value="JOINED"/>
    <property type="molecule type" value="Genomic_DNA"/>
</dbReference>
<dbReference type="EMBL" id="AL662829">
    <property type="protein sequence ID" value="CAP19221.1"/>
    <property type="status" value="JOINED"/>
    <property type="molecule type" value="Genomic_DNA"/>
</dbReference>
<dbReference type="EMBL" id="AL669940">
    <property type="protein sequence ID" value="CAP19221.1"/>
    <property type="status" value="JOINED"/>
    <property type="molecule type" value="Genomic_DNA"/>
</dbReference>
<dbReference type="EMBL" id="AL669959">
    <property type="protein sequence ID" value="CAP19221.1"/>
    <property type="status" value="JOINED"/>
    <property type="molecule type" value="Genomic_DNA"/>
</dbReference>
<dbReference type="EMBL" id="AL669965">
    <property type="protein sequence ID" value="CAP19221.1"/>
    <property type="status" value="JOINED"/>
    <property type="molecule type" value="Genomic_DNA"/>
</dbReference>
<dbReference type="EMBL" id="AL671895">
    <property type="protein sequence ID" value="CAP19221.1"/>
    <property type="status" value="JOINED"/>
    <property type="molecule type" value="Genomic_DNA"/>
</dbReference>
<dbReference type="EMBL" id="AL627347">
    <property type="protein sequence ID" value="CAQ11260.1"/>
    <property type="molecule type" value="Genomic_DNA"/>
</dbReference>
<dbReference type="EMBL" id="AL627183">
    <property type="protein sequence ID" value="CAQ11260.1"/>
    <property type="status" value="JOINED"/>
    <property type="molecule type" value="Genomic_DNA"/>
</dbReference>
<dbReference type="EMBL" id="AL627425">
    <property type="protein sequence ID" value="CAQ11260.1"/>
    <property type="status" value="JOINED"/>
    <property type="molecule type" value="Genomic_DNA"/>
</dbReference>
<dbReference type="EMBL" id="AL662829">
    <property type="protein sequence ID" value="CAQ11260.1"/>
    <property type="status" value="JOINED"/>
    <property type="molecule type" value="Genomic_DNA"/>
</dbReference>
<dbReference type="EMBL" id="AL669940">
    <property type="protein sequence ID" value="CAQ11260.1"/>
    <property type="status" value="JOINED"/>
    <property type="molecule type" value="Genomic_DNA"/>
</dbReference>
<dbReference type="EMBL" id="AL669959">
    <property type="protein sequence ID" value="CAQ11260.1"/>
    <property type="status" value="JOINED"/>
    <property type="molecule type" value="Genomic_DNA"/>
</dbReference>
<dbReference type="EMBL" id="AL669965">
    <property type="protein sequence ID" value="CAQ11260.1"/>
    <property type="status" value="JOINED"/>
    <property type="molecule type" value="Genomic_DNA"/>
</dbReference>
<dbReference type="EMBL" id="AL671895">
    <property type="protein sequence ID" value="CAQ11260.1"/>
    <property type="status" value="JOINED"/>
    <property type="molecule type" value="Genomic_DNA"/>
</dbReference>
<dbReference type="EMBL" id="AL669965">
    <property type="protein sequence ID" value="CAQ13050.1"/>
    <property type="molecule type" value="Genomic_DNA"/>
</dbReference>
<dbReference type="EMBL" id="AL627183">
    <property type="protein sequence ID" value="CAQ13050.1"/>
    <property type="status" value="JOINED"/>
    <property type="molecule type" value="Genomic_DNA"/>
</dbReference>
<dbReference type="EMBL" id="AL627347">
    <property type="protein sequence ID" value="CAQ13050.1"/>
    <property type="status" value="JOINED"/>
    <property type="molecule type" value="Genomic_DNA"/>
</dbReference>
<dbReference type="EMBL" id="AL627425">
    <property type="protein sequence ID" value="CAQ13050.1"/>
    <property type="status" value="JOINED"/>
    <property type="molecule type" value="Genomic_DNA"/>
</dbReference>
<dbReference type="EMBL" id="AL662829">
    <property type="protein sequence ID" value="CAQ13050.1"/>
    <property type="status" value="JOINED"/>
    <property type="molecule type" value="Genomic_DNA"/>
</dbReference>
<dbReference type="EMBL" id="AL669940">
    <property type="protein sequence ID" value="CAQ13050.1"/>
    <property type="status" value="JOINED"/>
    <property type="molecule type" value="Genomic_DNA"/>
</dbReference>
<dbReference type="EMBL" id="AL669959">
    <property type="protein sequence ID" value="CAQ13050.1"/>
    <property type="status" value="JOINED"/>
    <property type="molecule type" value="Genomic_DNA"/>
</dbReference>
<dbReference type="EMBL" id="AL671895">
    <property type="protein sequence ID" value="CAQ13050.1"/>
    <property type="status" value="JOINED"/>
    <property type="molecule type" value="Genomic_DNA"/>
</dbReference>
<dbReference type="CCDS" id="CCDS51263.1">
    <molecule id="Q09LZ8-2"/>
</dbReference>
<dbReference type="CCDS" id="CCDS51264.1">
    <molecule id="Q09LZ8-1"/>
</dbReference>
<dbReference type="RefSeq" id="NP_001041654.2">
    <molecule id="Q09LZ8-2"/>
    <property type="nucleotide sequence ID" value="NM_001048189.4"/>
</dbReference>
<dbReference type="RefSeq" id="NP_084507.1">
    <molecule id="Q09LZ8-1"/>
    <property type="nucleotide sequence ID" value="NM_030231.3"/>
</dbReference>
<dbReference type="SMR" id="Q09LZ8"/>
<dbReference type="BioGRID" id="219718">
    <property type="interactions" value="1"/>
</dbReference>
<dbReference type="FunCoup" id="Q09LZ8">
    <property type="interactions" value="93"/>
</dbReference>
<dbReference type="STRING" id="10090.ENSMUSP00000095533"/>
<dbReference type="MEROPS" id="M14.A32"/>
<dbReference type="iPTMnet" id="Q09LZ8"/>
<dbReference type="PhosphoSitePlus" id="Q09LZ8"/>
<dbReference type="PaxDb" id="10090-ENSMUSP00000095533"/>
<dbReference type="ProteomicsDB" id="283704">
    <molecule id="Q09LZ8-1"/>
</dbReference>
<dbReference type="ProteomicsDB" id="283705">
    <molecule id="Q09LZ8-2"/>
</dbReference>
<dbReference type="Antibodypedia" id="52065">
    <property type="antibodies" value="61 antibodies from 19 providers"/>
</dbReference>
<dbReference type="Ensembl" id="ENSMUST00000080744.13">
    <molecule id="Q09LZ8-2"/>
    <property type="protein sequence ID" value="ENSMUSP00000079568.7"/>
    <property type="gene ID" value="ENSMUSG00000061298.16"/>
</dbReference>
<dbReference type="Ensembl" id="ENSMUST00000097920.9">
    <molecule id="Q09LZ8-1"/>
    <property type="protein sequence ID" value="ENSMUSP00000095533.3"/>
    <property type="gene ID" value="ENSMUSG00000061298.16"/>
</dbReference>
<dbReference type="GeneID" id="78933"/>
<dbReference type="KEGG" id="mmu:78933"/>
<dbReference type="UCSC" id="uc008udc.2">
    <molecule id="Q09LZ8-1"/>
    <property type="organism name" value="mouse"/>
</dbReference>
<dbReference type="UCSC" id="uc008udd.2">
    <molecule id="Q09LZ8-2"/>
    <property type="organism name" value="mouse"/>
</dbReference>
<dbReference type="AGR" id="MGI:1918244"/>
<dbReference type="CTD" id="84871"/>
<dbReference type="MGI" id="MGI:1918244">
    <property type="gene designation" value="Agbl4"/>
</dbReference>
<dbReference type="VEuPathDB" id="HostDB:ENSMUSG00000061298"/>
<dbReference type="eggNOG" id="KOG3641">
    <property type="taxonomic scope" value="Eukaryota"/>
</dbReference>
<dbReference type="GeneTree" id="ENSGT00940000155042"/>
<dbReference type="HOGENOM" id="CLU_007523_6_1_1"/>
<dbReference type="InParanoid" id="Q09LZ8"/>
<dbReference type="OrthoDB" id="10253041at2759"/>
<dbReference type="PhylomeDB" id="Q09LZ8"/>
<dbReference type="TreeFam" id="TF333009"/>
<dbReference type="BioGRID-ORCS" id="78933">
    <property type="hits" value="3 hits in 77 CRISPR screens"/>
</dbReference>
<dbReference type="ChiTaRS" id="Agbl4">
    <property type="organism name" value="mouse"/>
</dbReference>
<dbReference type="PRO" id="PR:Q09LZ8"/>
<dbReference type="Proteomes" id="UP000000589">
    <property type="component" value="Chromosome 4"/>
</dbReference>
<dbReference type="RNAct" id="Q09LZ8">
    <property type="molecule type" value="protein"/>
</dbReference>
<dbReference type="Bgee" id="ENSMUSG00000061298">
    <property type="expression patterns" value="Expressed in spermatid and 66 other cell types or tissues"/>
</dbReference>
<dbReference type="ExpressionAtlas" id="Q09LZ8">
    <property type="expression patterns" value="baseline and differential"/>
</dbReference>
<dbReference type="GO" id="GO:1904115">
    <property type="term" value="C:axon cytoplasm"/>
    <property type="evidence" value="ECO:0007669"/>
    <property type="project" value="GOC"/>
</dbReference>
<dbReference type="GO" id="GO:0005814">
    <property type="term" value="C:centriole"/>
    <property type="evidence" value="ECO:0000250"/>
    <property type="project" value="UniProtKB"/>
</dbReference>
<dbReference type="GO" id="GO:0036064">
    <property type="term" value="C:ciliary basal body"/>
    <property type="evidence" value="ECO:0000250"/>
    <property type="project" value="UniProtKB"/>
</dbReference>
<dbReference type="GO" id="GO:0005829">
    <property type="term" value="C:cytosol"/>
    <property type="evidence" value="ECO:0000314"/>
    <property type="project" value="UniProtKB"/>
</dbReference>
<dbReference type="GO" id="GO:0005794">
    <property type="term" value="C:Golgi apparatus"/>
    <property type="evidence" value="ECO:0000250"/>
    <property type="project" value="UniProtKB"/>
</dbReference>
<dbReference type="GO" id="GO:0004181">
    <property type="term" value="F:metallocarboxypeptidase activity"/>
    <property type="evidence" value="ECO:0000314"/>
    <property type="project" value="UniProtKB"/>
</dbReference>
<dbReference type="GO" id="GO:0015631">
    <property type="term" value="F:tubulin binding"/>
    <property type="evidence" value="ECO:0000314"/>
    <property type="project" value="UniProtKB"/>
</dbReference>
<dbReference type="GO" id="GO:0008270">
    <property type="term" value="F:zinc ion binding"/>
    <property type="evidence" value="ECO:0007669"/>
    <property type="project" value="InterPro"/>
</dbReference>
<dbReference type="GO" id="GO:0098957">
    <property type="term" value="P:anterograde axonal transport of mitochondrion"/>
    <property type="evidence" value="ECO:0000316"/>
    <property type="project" value="MGI"/>
</dbReference>
<dbReference type="GO" id="GO:0098930">
    <property type="term" value="P:axonal transport"/>
    <property type="evidence" value="ECO:0000316"/>
    <property type="project" value="MGI"/>
</dbReference>
<dbReference type="GO" id="GO:0035609">
    <property type="term" value="P:C-terminal protein deglutamylation"/>
    <property type="evidence" value="ECO:0000314"/>
    <property type="project" value="UniProtKB"/>
</dbReference>
<dbReference type="GO" id="GO:0021954">
    <property type="term" value="P:central nervous system neuron development"/>
    <property type="evidence" value="ECO:0000316"/>
    <property type="project" value="MGI"/>
</dbReference>
<dbReference type="GO" id="GO:0051607">
    <property type="term" value="P:defense response to virus"/>
    <property type="evidence" value="ECO:0000315"/>
    <property type="project" value="UniProtKB"/>
</dbReference>
<dbReference type="GO" id="GO:0008285">
    <property type="term" value="P:negative regulation of cell population proliferation"/>
    <property type="evidence" value="ECO:0000315"/>
    <property type="project" value="MGI"/>
</dbReference>
<dbReference type="GO" id="GO:2000060">
    <property type="term" value="P:positive regulation of ubiquitin-dependent protein catabolic process"/>
    <property type="evidence" value="ECO:0000315"/>
    <property type="project" value="MGI"/>
</dbReference>
<dbReference type="GO" id="GO:0035608">
    <property type="term" value="P:protein deglutamylation"/>
    <property type="evidence" value="ECO:0000315"/>
    <property type="project" value="UniProtKB"/>
</dbReference>
<dbReference type="GO" id="GO:0035610">
    <property type="term" value="P:protein side chain deglutamylation"/>
    <property type="evidence" value="ECO:0000314"/>
    <property type="project" value="UniProtKB"/>
</dbReference>
<dbReference type="GO" id="GO:0006508">
    <property type="term" value="P:proteolysis"/>
    <property type="evidence" value="ECO:0007669"/>
    <property type="project" value="UniProtKB-KW"/>
</dbReference>
<dbReference type="GO" id="GO:0120222">
    <property type="term" value="P:regulation of blastocyst development"/>
    <property type="evidence" value="ECO:0000315"/>
    <property type="project" value="MGI"/>
</dbReference>
<dbReference type="GO" id="GO:0098958">
    <property type="term" value="P:retrograde axonal transport of mitochondrion"/>
    <property type="evidence" value="ECO:0000316"/>
    <property type="project" value="MGI"/>
</dbReference>
<dbReference type="CDD" id="cd06908">
    <property type="entry name" value="M14_AGBL4_like"/>
    <property type="match status" value="1"/>
</dbReference>
<dbReference type="FunFam" id="3.40.630.10:FF:000062">
    <property type="entry name" value="Cytosolic carboxypeptidase 6"/>
    <property type="match status" value="1"/>
</dbReference>
<dbReference type="FunFam" id="2.60.40.3120:FF:000003">
    <property type="entry name" value="cytosolic carboxypeptidase 6 isoform X2"/>
    <property type="match status" value="1"/>
</dbReference>
<dbReference type="Gene3D" id="2.60.40.3120">
    <property type="match status" value="1"/>
</dbReference>
<dbReference type="Gene3D" id="3.40.630.10">
    <property type="entry name" value="Zn peptidases"/>
    <property type="match status" value="1"/>
</dbReference>
<dbReference type="InterPro" id="IPR050821">
    <property type="entry name" value="Cytosolic_carboxypeptidase"/>
</dbReference>
<dbReference type="InterPro" id="IPR040626">
    <property type="entry name" value="Pepdidase_M14_N"/>
</dbReference>
<dbReference type="InterPro" id="IPR000834">
    <property type="entry name" value="Peptidase_M14"/>
</dbReference>
<dbReference type="PANTHER" id="PTHR12756">
    <property type="entry name" value="CYTOSOLIC CARBOXYPEPTIDASE"/>
    <property type="match status" value="1"/>
</dbReference>
<dbReference type="PANTHER" id="PTHR12756:SF9">
    <property type="entry name" value="CYTOSOLIC CARBOXYPEPTIDASE 6"/>
    <property type="match status" value="1"/>
</dbReference>
<dbReference type="Pfam" id="PF18027">
    <property type="entry name" value="Pepdidase_M14_N"/>
    <property type="match status" value="1"/>
</dbReference>
<dbReference type="Pfam" id="PF00246">
    <property type="entry name" value="Peptidase_M14"/>
    <property type="match status" value="1"/>
</dbReference>
<dbReference type="SMART" id="SM00631">
    <property type="entry name" value="Zn_pept"/>
    <property type="match status" value="1"/>
</dbReference>
<dbReference type="SUPFAM" id="SSF53187">
    <property type="entry name" value="Zn-dependent exopeptidases"/>
    <property type="match status" value="1"/>
</dbReference>
<dbReference type="PROSITE" id="PS52035">
    <property type="entry name" value="PEPTIDASE_M14"/>
    <property type="match status" value="1"/>
</dbReference>
<reference key="1">
    <citation type="journal article" date="2007" name="FASEB J.">
        <title>A novel subfamily of mouse cytosolic carboxypeptidases.</title>
        <authorList>
            <person name="Kalinina E."/>
            <person name="Biswas R."/>
            <person name="Berezniuk I."/>
            <person name="Hermoso A."/>
            <person name="Aviles F.X."/>
            <person name="Fricker L.D."/>
        </authorList>
    </citation>
    <scope>NUCLEOTIDE SEQUENCE [MRNA] (ISOFORMS 1 AND 2)</scope>
    <scope>TISSUE SPECIFICITY</scope>
    <scope>SUBCELLULAR LOCATION</scope>
    <source>
        <strain>C57BLKS/J</strain>
    </source>
</reference>
<reference key="2">
    <citation type="journal article" date="2009" name="PLoS Biol.">
        <title>Lineage-specific biology revealed by a finished genome assembly of the mouse.</title>
        <authorList>
            <person name="Church D.M."/>
            <person name="Goodstadt L."/>
            <person name="Hillier L.W."/>
            <person name="Zody M.C."/>
            <person name="Goldstein S."/>
            <person name="She X."/>
            <person name="Bult C.J."/>
            <person name="Agarwala R."/>
            <person name="Cherry J.L."/>
            <person name="DiCuccio M."/>
            <person name="Hlavina W."/>
            <person name="Kapustin Y."/>
            <person name="Meric P."/>
            <person name="Maglott D."/>
            <person name="Birtle Z."/>
            <person name="Marques A.C."/>
            <person name="Graves T."/>
            <person name="Zhou S."/>
            <person name="Teague B."/>
            <person name="Potamousis K."/>
            <person name="Churas C."/>
            <person name="Place M."/>
            <person name="Herschleb J."/>
            <person name="Runnheim R."/>
            <person name="Forrest D."/>
            <person name="Amos-Landgraf J."/>
            <person name="Schwartz D.C."/>
            <person name="Cheng Z."/>
            <person name="Lindblad-Toh K."/>
            <person name="Eichler E.E."/>
            <person name="Ponting C.P."/>
        </authorList>
    </citation>
    <scope>NUCLEOTIDE SEQUENCE [LARGE SCALE GENOMIC DNA]</scope>
    <source>
        <strain>C57BL/6J</strain>
    </source>
</reference>
<reference key="3">
    <citation type="journal article" date="2010" name="Cell">
        <title>A family of protein-deglutamylating enzymes associated with neurodegeneration.</title>
        <authorList>
            <person name="Rogowski K."/>
            <person name="van Dijk J."/>
            <person name="Magiera M.M."/>
            <person name="Bosc C."/>
            <person name="Deloulme J.C."/>
            <person name="Bosson A."/>
            <person name="Peris L."/>
            <person name="Gold N.D."/>
            <person name="Lacroix B."/>
            <person name="Grau M.B."/>
            <person name="Bec N."/>
            <person name="Larroque C."/>
            <person name="Desagher S."/>
            <person name="Holzer M."/>
            <person name="Andrieux A."/>
            <person name="Moutin M.J."/>
            <person name="Janke C."/>
        </authorList>
    </citation>
    <scope>FUNCTION</scope>
    <scope>TISSUE SPECIFICITY</scope>
    <scope>INTERACTION WITH MYLK</scope>
    <scope>MUTAGENESIS OF HIS-230 AND GLU-233</scope>
</reference>
<reference key="4">
    <citation type="journal article" date="2014" name="Mol. Biol. Cell">
        <title>The cytosolic carboxypeptidases CCP2 and CCP3 catalyze posttranslational removal of acidic amino acids.</title>
        <authorList>
            <person name="Tort O."/>
            <person name="Tanco S."/>
            <person name="Rocha C."/>
            <person name="Bieche I."/>
            <person name="Seixas C."/>
            <person name="Bosc C."/>
            <person name="Andrieux A."/>
            <person name="Moutin M.J."/>
            <person name="Aviles F.X."/>
            <person name="Lorenzo J."/>
            <person name="Janke C."/>
        </authorList>
    </citation>
    <scope>FUNCTION</scope>
    <scope>CATALYTIC ACTIVITY</scope>
    <scope>TISSUE SPECIFICITY</scope>
</reference>
<reference key="5">
    <citation type="journal article" date="2016" name="Nat. Immunol.">
        <title>Glutamylation of the DNA sensor cGAS regulates its binding and synthase activity in antiviral immunity.</title>
        <authorList>
            <person name="Xia P."/>
            <person name="Ye B."/>
            <person name="Wang S."/>
            <person name="Zhu X."/>
            <person name="Du Y."/>
            <person name="Xiong Z."/>
            <person name="Tian Y."/>
            <person name="Fan Z."/>
        </authorList>
    </citation>
    <scope>FUNCTION</scope>
    <scope>CATALYTIC ACTIVITY</scope>
    <scope>DISRUPTION PHENOTYPE</scope>
    <scope>MUTAGENESIS OF HIS-230 AND GLU-233</scope>
</reference>
<reference key="6">
    <citation type="journal article" date="2018" name="Nat. Commun.">
        <title>Klf4 glutamylation is required for cell reprogramming and early embryonic development in mice.</title>
        <authorList>
            <person name="Ye B."/>
            <person name="Liu B."/>
            <person name="Hao L."/>
            <person name="Zhu X."/>
            <person name="Yang L."/>
            <person name="Wang S."/>
            <person name="Xia P."/>
            <person name="Du Y."/>
            <person name="Meng S."/>
            <person name="Huang G."/>
            <person name="Qin X."/>
            <person name="Wang Y."/>
            <person name="Yan X."/>
            <person name="Li C."/>
            <person name="Hao J."/>
            <person name="Zhu P."/>
            <person name="He L."/>
            <person name="Tian Y."/>
            <person name="Fan Z."/>
        </authorList>
    </citation>
    <scope>FUNCTION</scope>
    <scope>CATALYTIC ACTIVITY</scope>
    <scope>DISRUPTION PHENOTYPE</scope>
</reference>
<accession>Q09LZ8</accession>
<accession>A2A979</accession>
<accession>A6PWC5</accession>
<accession>A6PWC6</accession>
<accession>Q09LZ9</accession>
<sequence>MAERSQTAPEAGNDTGNEDAIGGNVNKYIVLPNGYSGQPKKGHLTFDACFESGNLGRVEQVSDFEYDLFIRPDTCNPRFRVWFNFTVENVKELQRVIFNIVNFSKTKSLYRDGMAPMVKSTSRPKWQRLPPKNVYYYRCPDHRKNYVMSFAFCFDREDDIYQFAYCYPYTYTRFQHYLDSLQKKNMDYFFREQLGQSVQQRQLDLLTITSPENLREGSEKKVIFITGRVHPGETPSSFVCQGIIDFLVSQHPIARVLREHLVFKIAPMLNPDGVYLGNYRCSLMGFDLNRHWLDPSPWAHPTLHGVKQLIIKMYNDPKTSLEFYIDIHAHSTMMNGFMYGNIFEDEERFQRQSIFPKLLCQNAEDFSYTSTSFNRDAVKAGTGRRFLGGLLDHSSYCYTLEVSFYSYIIGGTTAAVPYTEEAYMKLGRNVARTFLDYYRLNSLVEKIAVPMPRLRSKEERRLGWEHPSCLRAEQPLEVLGIPMCSGKALNEHLGNDIQWHLDCGSSTLPLGLISCSPSSSASWNDMAMSNSILLPDHSFH</sequence>
<organism>
    <name type="scientific">Mus musculus</name>
    <name type="common">Mouse</name>
    <dbReference type="NCBI Taxonomy" id="10090"/>
    <lineage>
        <taxon>Eukaryota</taxon>
        <taxon>Metazoa</taxon>
        <taxon>Chordata</taxon>
        <taxon>Craniata</taxon>
        <taxon>Vertebrata</taxon>
        <taxon>Euteleostomi</taxon>
        <taxon>Mammalia</taxon>
        <taxon>Eutheria</taxon>
        <taxon>Euarchontoglires</taxon>
        <taxon>Glires</taxon>
        <taxon>Rodentia</taxon>
        <taxon>Myomorpha</taxon>
        <taxon>Muroidea</taxon>
        <taxon>Muridae</taxon>
        <taxon>Murinae</taxon>
        <taxon>Mus</taxon>
        <taxon>Mus</taxon>
    </lineage>
</organism>